<name>RIMM_CERS4</name>
<keyword id="KW-0143">Chaperone</keyword>
<keyword id="KW-0963">Cytoplasm</keyword>
<keyword id="KW-1185">Reference proteome</keyword>
<keyword id="KW-0690">Ribosome biogenesis</keyword>
<keyword id="KW-0698">rRNA processing</keyword>
<evidence type="ECO:0000255" key="1">
    <source>
        <dbReference type="HAMAP-Rule" id="MF_00014"/>
    </source>
</evidence>
<protein>
    <recommendedName>
        <fullName evidence="1">Ribosome maturation factor RimM</fullName>
    </recommendedName>
</protein>
<reference key="1">
    <citation type="submission" date="2005-09" db="EMBL/GenBank/DDBJ databases">
        <title>Complete sequence of chromosome 1 of Rhodobacter sphaeroides 2.4.1.</title>
        <authorList>
            <person name="Copeland A."/>
            <person name="Lucas S."/>
            <person name="Lapidus A."/>
            <person name="Barry K."/>
            <person name="Detter J.C."/>
            <person name="Glavina T."/>
            <person name="Hammon N."/>
            <person name="Israni S."/>
            <person name="Pitluck S."/>
            <person name="Richardson P."/>
            <person name="Mackenzie C."/>
            <person name="Choudhary M."/>
            <person name="Larimer F."/>
            <person name="Hauser L.J."/>
            <person name="Land M."/>
            <person name="Donohue T.J."/>
            <person name="Kaplan S."/>
        </authorList>
    </citation>
    <scope>NUCLEOTIDE SEQUENCE [LARGE SCALE GENOMIC DNA]</scope>
    <source>
        <strain>ATCC 17023 / DSM 158 / JCM 6121 / CCUG 31486 / LMG 2827 / NBRC 12203 / NCIMB 8253 / ATH 2.4.1.</strain>
    </source>
</reference>
<dbReference type="EMBL" id="CP000143">
    <property type="protein sequence ID" value="ABA80231.1"/>
    <property type="molecule type" value="Genomic_DNA"/>
</dbReference>
<dbReference type="RefSeq" id="WP_002721394.1">
    <property type="nucleotide sequence ID" value="NZ_AKVW01000001.1"/>
</dbReference>
<dbReference type="RefSeq" id="YP_354132.1">
    <property type="nucleotide sequence ID" value="NC_007493.2"/>
</dbReference>
<dbReference type="SMR" id="Q3IZ03"/>
<dbReference type="STRING" id="272943.RSP_1047"/>
<dbReference type="EnsemblBacteria" id="ABA80231">
    <property type="protein sequence ID" value="ABA80231"/>
    <property type="gene ID" value="RSP_1047"/>
</dbReference>
<dbReference type="GeneID" id="67447820"/>
<dbReference type="KEGG" id="rsp:RSP_1047"/>
<dbReference type="PATRIC" id="fig|272943.9.peg.3021"/>
<dbReference type="eggNOG" id="COG0806">
    <property type="taxonomic scope" value="Bacteria"/>
</dbReference>
<dbReference type="OrthoDB" id="9788191at2"/>
<dbReference type="PhylomeDB" id="Q3IZ03"/>
<dbReference type="Proteomes" id="UP000002703">
    <property type="component" value="Chromosome 1"/>
</dbReference>
<dbReference type="GO" id="GO:0005737">
    <property type="term" value="C:cytoplasm"/>
    <property type="evidence" value="ECO:0007669"/>
    <property type="project" value="UniProtKB-SubCell"/>
</dbReference>
<dbReference type="GO" id="GO:0005840">
    <property type="term" value="C:ribosome"/>
    <property type="evidence" value="ECO:0007669"/>
    <property type="project" value="InterPro"/>
</dbReference>
<dbReference type="GO" id="GO:0043022">
    <property type="term" value="F:ribosome binding"/>
    <property type="evidence" value="ECO:0007669"/>
    <property type="project" value="InterPro"/>
</dbReference>
<dbReference type="GO" id="GO:0042274">
    <property type="term" value="P:ribosomal small subunit biogenesis"/>
    <property type="evidence" value="ECO:0007669"/>
    <property type="project" value="UniProtKB-UniRule"/>
</dbReference>
<dbReference type="GO" id="GO:0006364">
    <property type="term" value="P:rRNA processing"/>
    <property type="evidence" value="ECO:0007669"/>
    <property type="project" value="UniProtKB-UniRule"/>
</dbReference>
<dbReference type="Gene3D" id="2.30.30.240">
    <property type="entry name" value="PRC-barrel domain"/>
    <property type="match status" value="1"/>
</dbReference>
<dbReference type="Gene3D" id="2.40.30.60">
    <property type="entry name" value="RimM"/>
    <property type="match status" value="1"/>
</dbReference>
<dbReference type="HAMAP" id="MF_00014">
    <property type="entry name" value="Ribosome_mat_RimM"/>
    <property type="match status" value="1"/>
</dbReference>
<dbReference type="InterPro" id="IPR011033">
    <property type="entry name" value="PRC_barrel-like_sf"/>
</dbReference>
<dbReference type="InterPro" id="IPR056792">
    <property type="entry name" value="PRC_RimM"/>
</dbReference>
<dbReference type="InterPro" id="IPR011961">
    <property type="entry name" value="RimM"/>
</dbReference>
<dbReference type="InterPro" id="IPR002676">
    <property type="entry name" value="RimM_N"/>
</dbReference>
<dbReference type="InterPro" id="IPR036976">
    <property type="entry name" value="RimM_N_sf"/>
</dbReference>
<dbReference type="InterPro" id="IPR009000">
    <property type="entry name" value="Transl_B-barrel_sf"/>
</dbReference>
<dbReference type="NCBIfam" id="TIGR02273">
    <property type="entry name" value="16S_RimM"/>
    <property type="match status" value="1"/>
</dbReference>
<dbReference type="PANTHER" id="PTHR33692">
    <property type="entry name" value="RIBOSOME MATURATION FACTOR RIMM"/>
    <property type="match status" value="1"/>
</dbReference>
<dbReference type="PANTHER" id="PTHR33692:SF1">
    <property type="entry name" value="RIBOSOME MATURATION FACTOR RIMM"/>
    <property type="match status" value="1"/>
</dbReference>
<dbReference type="Pfam" id="PF24986">
    <property type="entry name" value="PRC_RimM"/>
    <property type="match status" value="1"/>
</dbReference>
<dbReference type="Pfam" id="PF01782">
    <property type="entry name" value="RimM"/>
    <property type="match status" value="1"/>
</dbReference>
<dbReference type="SUPFAM" id="SSF50346">
    <property type="entry name" value="PRC-barrel domain"/>
    <property type="match status" value="1"/>
</dbReference>
<dbReference type="SUPFAM" id="SSF50447">
    <property type="entry name" value="Translation proteins"/>
    <property type="match status" value="1"/>
</dbReference>
<gene>
    <name evidence="1" type="primary">rimM</name>
    <name type="ordered locus">RHOS4_26630</name>
    <name type="ORF">RSP_1047</name>
</gene>
<accession>Q3IZ03</accession>
<comment type="function">
    <text evidence="1">An accessory protein needed during the final step in the assembly of 30S ribosomal subunit, possibly for assembly of the head region. Essential for efficient processing of 16S rRNA. May be needed both before and after RbfA during the maturation of 16S rRNA. It has affinity for free ribosomal 30S subunits but not for 70S ribosomes.</text>
</comment>
<comment type="subunit">
    <text evidence="1">Binds ribosomal protein uS19.</text>
</comment>
<comment type="subcellular location">
    <subcellularLocation>
        <location evidence="1">Cytoplasm</location>
    </subcellularLocation>
</comment>
<comment type="domain">
    <text evidence="1">The PRC barrel domain binds ribosomal protein uS19.</text>
</comment>
<comment type="similarity">
    <text evidence="1">Belongs to the RimM family.</text>
</comment>
<feature type="chain" id="PRO_0000244156" description="Ribosome maturation factor RimM">
    <location>
        <begin position="1"/>
        <end position="169"/>
    </location>
</feature>
<feature type="domain" description="PRC barrel" evidence="1">
    <location>
        <begin position="94"/>
        <end position="168"/>
    </location>
</feature>
<proteinExistence type="inferred from homology"/>
<organism>
    <name type="scientific">Cereibacter sphaeroides (strain ATCC 17023 / DSM 158 / JCM 6121 / CCUG 31486 / LMG 2827 / NBRC 12203 / NCIMB 8253 / ATH 2.4.1.)</name>
    <name type="common">Rhodobacter sphaeroides</name>
    <dbReference type="NCBI Taxonomy" id="272943"/>
    <lineage>
        <taxon>Bacteria</taxon>
        <taxon>Pseudomonadati</taxon>
        <taxon>Pseudomonadota</taxon>
        <taxon>Alphaproteobacteria</taxon>
        <taxon>Rhodobacterales</taxon>
        <taxon>Paracoccaceae</taxon>
        <taxon>Cereibacter</taxon>
    </lineage>
</organism>
<sequence length="169" mass="17621">MTKTDRVCVGAIAGAFGVKGEVRLKSFCTEPTDIASYGPLSTEKGDRSFRVTLTRPVAGGLGARLSDVTTKEEADALRGVGLYVDRARLPSLGDDEFYHADLIGLEVRDTGGALLGRVHAVHNHGAGDILEVAGAAGREGLLLPFTRAVVPTVDLAAGRIVADPPEGLD</sequence>